<evidence type="ECO:0000255" key="1">
    <source>
        <dbReference type="HAMAP-Rule" id="MF_00071"/>
    </source>
</evidence>
<gene>
    <name evidence="1" type="primary">lepA</name>
    <name type="ordered locus">Fjoh_0786</name>
</gene>
<sequence>MKKIRNFCIIAHIDHGKSTLADRLLGATQTVTAREEKAQLLDNMDLERERGITIKSHAIQMEYKYKGEEYILNLIDTPGHVDFSYEVSRSIAACEGALLIVDAAQSIQAQTISNLYLALENDLEIIPVLNKVDLPSANPEEVSDDIIDLLGCKLEDIIHASGKTGFGVENILAAIIEKIPPPKGDPEEPLQALIFDSVYNPFRGIEVIFRVVNGEIKKGQKIKFMATDNEYFADEIGTLKLNQVPKNVVSAGDVGYLISGIKEAREVKVGDTITDAKVPTTNMITGFEDVKPMVFAGIYPVDTEDYEDLRSSMEKLQLNDASLVFTPESSAALGFGFRCGFLGMLHMEIIQERLEREFDMTVITTVPNVSYLAYTKKEPEKALIVNNPSDLPEPSKLDRVEEPFIKATIITKADFVGNVMSLCIEKRGLITNQTYLTTERVELNFDMPLAEIVFDFYDRLKTVSKGYASFDYSPIGMRTSKLVKLDVLLNAQTVDALSALIHEDNAYNIGKKMTEKLRELIPRQQFDIPIQAAIGAKIIARETIKALRKDVTAKCYGGDISRKRKLLEKQKKGKKRMRQVGNVEIPQEAFMAVLKLND</sequence>
<proteinExistence type="inferred from homology"/>
<keyword id="KW-0997">Cell inner membrane</keyword>
<keyword id="KW-1003">Cell membrane</keyword>
<keyword id="KW-0342">GTP-binding</keyword>
<keyword id="KW-0378">Hydrolase</keyword>
<keyword id="KW-0472">Membrane</keyword>
<keyword id="KW-0547">Nucleotide-binding</keyword>
<keyword id="KW-0648">Protein biosynthesis</keyword>
<name>LEPA_FLAJ1</name>
<accession>A5FLU8</accession>
<dbReference type="EC" id="3.6.5.n1" evidence="1"/>
<dbReference type="EMBL" id="CP000685">
    <property type="protein sequence ID" value="ABQ03820.1"/>
    <property type="molecule type" value="Genomic_DNA"/>
</dbReference>
<dbReference type="RefSeq" id="WP_012022874.1">
    <property type="nucleotide sequence ID" value="NZ_MUGZ01000001.1"/>
</dbReference>
<dbReference type="SMR" id="A5FLU8"/>
<dbReference type="STRING" id="376686.Fjoh_0786"/>
<dbReference type="KEGG" id="fjo:Fjoh_0786"/>
<dbReference type="eggNOG" id="COG0481">
    <property type="taxonomic scope" value="Bacteria"/>
</dbReference>
<dbReference type="HOGENOM" id="CLU_009995_3_3_10"/>
<dbReference type="OrthoDB" id="9801591at2"/>
<dbReference type="Proteomes" id="UP000006694">
    <property type="component" value="Chromosome"/>
</dbReference>
<dbReference type="GO" id="GO:0005886">
    <property type="term" value="C:plasma membrane"/>
    <property type="evidence" value="ECO:0007669"/>
    <property type="project" value="UniProtKB-SubCell"/>
</dbReference>
<dbReference type="GO" id="GO:0005525">
    <property type="term" value="F:GTP binding"/>
    <property type="evidence" value="ECO:0007669"/>
    <property type="project" value="UniProtKB-UniRule"/>
</dbReference>
<dbReference type="GO" id="GO:0003924">
    <property type="term" value="F:GTPase activity"/>
    <property type="evidence" value="ECO:0007669"/>
    <property type="project" value="UniProtKB-UniRule"/>
</dbReference>
<dbReference type="GO" id="GO:0043022">
    <property type="term" value="F:ribosome binding"/>
    <property type="evidence" value="ECO:0007669"/>
    <property type="project" value="UniProtKB-UniRule"/>
</dbReference>
<dbReference type="GO" id="GO:0003746">
    <property type="term" value="F:translation elongation factor activity"/>
    <property type="evidence" value="ECO:0007669"/>
    <property type="project" value="UniProtKB-UniRule"/>
</dbReference>
<dbReference type="GO" id="GO:0045727">
    <property type="term" value="P:positive regulation of translation"/>
    <property type="evidence" value="ECO:0007669"/>
    <property type="project" value="UniProtKB-UniRule"/>
</dbReference>
<dbReference type="CDD" id="cd03699">
    <property type="entry name" value="EF4_II"/>
    <property type="match status" value="1"/>
</dbReference>
<dbReference type="CDD" id="cd16260">
    <property type="entry name" value="EF4_III"/>
    <property type="match status" value="1"/>
</dbReference>
<dbReference type="CDD" id="cd01890">
    <property type="entry name" value="LepA"/>
    <property type="match status" value="1"/>
</dbReference>
<dbReference type="CDD" id="cd03709">
    <property type="entry name" value="lepA_C"/>
    <property type="match status" value="1"/>
</dbReference>
<dbReference type="FunFam" id="3.40.50.300:FF:000078">
    <property type="entry name" value="Elongation factor 4"/>
    <property type="match status" value="1"/>
</dbReference>
<dbReference type="FunFam" id="2.40.30.10:FF:000015">
    <property type="entry name" value="Translation factor GUF1, mitochondrial"/>
    <property type="match status" value="1"/>
</dbReference>
<dbReference type="FunFam" id="3.30.70.240:FF:000007">
    <property type="entry name" value="Translation factor GUF1, mitochondrial"/>
    <property type="match status" value="1"/>
</dbReference>
<dbReference type="FunFam" id="3.30.70.2570:FF:000001">
    <property type="entry name" value="Translation factor GUF1, mitochondrial"/>
    <property type="match status" value="1"/>
</dbReference>
<dbReference type="FunFam" id="3.30.70.870:FF:000004">
    <property type="entry name" value="Translation factor GUF1, mitochondrial"/>
    <property type="match status" value="1"/>
</dbReference>
<dbReference type="Gene3D" id="3.30.70.240">
    <property type="match status" value="1"/>
</dbReference>
<dbReference type="Gene3D" id="3.30.70.2570">
    <property type="entry name" value="Elongation factor 4, C-terminal domain"/>
    <property type="match status" value="1"/>
</dbReference>
<dbReference type="Gene3D" id="3.30.70.870">
    <property type="entry name" value="Elongation Factor G (Translational Gtpase), domain 3"/>
    <property type="match status" value="1"/>
</dbReference>
<dbReference type="Gene3D" id="3.40.50.300">
    <property type="entry name" value="P-loop containing nucleotide triphosphate hydrolases"/>
    <property type="match status" value="1"/>
</dbReference>
<dbReference type="Gene3D" id="2.40.30.10">
    <property type="entry name" value="Translation factors"/>
    <property type="match status" value="1"/>
</dbReference>
<dbReference type="HAMAP" id="MF_00071">
    <property type="entry name" value="LepA"/>
    <property type="match status" value="1"/>
</dbReference>
<dbReference type="InterPro" id="IPR006297">
    <property type="entry name" value="EF-4"/>
</dbReference>
<dbReference type="InterPro" id="IPR035647">
    <property type="entry name" value="EFG_III/V"/>
</dbReference>
<dbReference type="InterPro" id="IPR000640">
    <property type="entry name" value="EFG_V-like"/>
</dbReference>
<dbReference type="InterPro" id="IPR004161">
    <property type="entry name" value="EFTu-like_2"/>
</dbReference>
<dbReference type="InterPro" id="IPR038363">
    <property type="entry name" value="LepA_C_sf"/>
</dbReference>
<dbReference type="InterPro" id="IPR013842">
    <property type="entry name" value="LepA_CTD"/>
</dbReference>
<dbReference type="InterPro" id="IPR035654">
    <property type="entry name" value="LepA_IV"/>
</dbReference>
<dbReference type="InterPro" id="IPR027417">
    <property type="entry name" value="P-loop_NTPase"/>
</dbReference>
<dbReference type="InterPro" id="IPR005225">
    <property type="entry name" value="Small_GTP-bd"/>
</dbReference>
<dbReference type="InterPro" id="IPR000795">
    <property type="entry name" value="T_Tr_GTP-bd_dom"/>
</dbReference>
<dbReference type="InterPro" id="IPR009000">
    <property type="entry name" value="Transl_B-barrel_sf"/>
</dbReference>
<dbReference type="NCBIfam" id="TIGR01393">
    <property type="entry name" value="lepA"/>
    <property type="match status" value="1"/>
</dbReference>
<dbReference type="NCBIfam" id="TIGR00231">
    <property type="entry name" value="small_GTP"/>
    <property type="match status" value="1"/>
</dbReference>
<dbReference type="PANTHER" id="PTHR43512:SF4">
    <property type="entry name" value="TRANSLATION FACTOR GUF1 HOMOLOG, CHLOROPLASTIC"/>
    <property type="match status" value="1"/>
</dbReference>
<dbReference type="PANTHER" id="PTHR43512">
    <property type="entry name" value="TRANSLATION FACTOR GUF1-RELATED"/>
    <property type="match status" value="1"/>
</dbReference>
<dbReference type="Pfam" id="PF00679">
    <property type="entry name" value="EFG_C"/>
    <property type="match status" value="1"/>
</dbReference>
<dbReference type="Pfam" id="PF00009">
    <property type="entry name" value="GTP_EFTU"/>
    <property type="match status" value="1"/>
</dbReference>
<dbReference type="Pfam" id="PF03144">
    <property type="entry name" value="GTP_EFTU_D2"/>
    <property type="match status" value="1"/>
</dbReference>
<dbReference type="Pfam" id="PF06421">
    <property type="entry name" value="LepA_C"/>
    <property type="match status" value="1"/>
</dbReference>
<dbReference type="PRINTS" id="PR00315">
    <property type="entry name" value="ELONGATNFCT"/>
</dbReference>
<dbReference type="SUPFAM" id="SSF54980">
    <property type="entry name" value="EF-G C-terminal domain-like"/>
    <property type="match status" value="2"/>
</dbReference>
<dbReference type="SUPFAM" id="SSF52540">
    <property type="entry name" value="P-loop containing nucleoside triphosphate hydrolases"/>
    <property type="match status" value="1"/>
</dbReference>
<dbReference type="SUPFAM" id="SSF50447">
    <property type="entry name" value="Translation proteins"/>
    <property type="match status" value="1"/>
</dbReference>
<dbReference type="PROSITE" id="PS51722">
    <property type="entry name" value="G_TR_2"/>
    <property type="match status" value="1"/>
</dbReference>
<reference key="1">
    <citation type="journal article" date="2009" name="Appl. Environ. Microbiol.">
        <title>Novel features of the polysaccharide-digesting gliding bacterium Flavobacterium johnsoniae as revealed by genome sequence analysis.</title>
        <authorList>
            <person name="McBride M.J."/>
            <person name="Xie G."/>
            <person name="Martens E.C."/>
            <person name="Lapidus A."/>
            <person name="Henrissat B."/>
            <person name="Rhodes R.G."/>
            <person name="Goltsman E."/>
            <person name="Wang W."/>
            <person name="Xu J."/>
            <person name="Hunnicutt D.W."/>
            <person name="Staroscik A.M."/>
            <person name="Hoover T.R."/>
            <person name="Cheng Y.Q."/>
            <person name="Stein J.L."/>
        </authorList>
    </citation>
    <scope>NUCLEOTIDE SEQUENCE [LARGE SCALE GENOMIC DNA]</scope>
    <source>
        <strain>ATCC 17061 / DSM 2064 / JCM 8514 / BCRC 14874 / CCUG 350202 / NBRC 14942 / NCIMB 11054 / UW101</strain>
    </source>
</reference>
<organism>
    <name type="scientific">Flavobacterium johnsoniae (strain ATCC 17061 / DSM 2064 / JCM 8514 / BCRC 14874 / CCUG 350202 / NBRC 14942 / NCIMB 11054 / UW101)</name>
    <name type="common">Cytophaga johnsonae</name>
    <dbReference type="NCBI Taxonomy" id="376686"/>
    <lineage>
        <taxon>Bacteria</taxon>
        <taxon>Pseudomonadati</taxon>
        <taxon>Bacteroidota</taxon>
        <taxon>Flavobacteriia</taxon>
        <taxon>Flavobacteriales</taxon>
        <taxon>Flavobacteriaceae</taxon>
        <taxon>Flavobacterium</taxon>
    </lineage>
</organism>
<feature type="chain" id="PRO_1000075133" description="Elongation factor 4">
    <location>
        <begin position="1"/>
        <end position="598"/>
    </location>
</feature>
<feature type="domain" description="tr-type G">
    <location>
        <begin position="2"/>
        <end position="183"/>
    </location>
</feature>
<feature type="binding site" evidence="1">
    <location>
        <begin position="14"/>
        <end position="19"/>
    </location>
    <ligand>
        <name>GTP</name>
        <dbReference type="ChEBI" id="CHEBI:37565"/>
    </ligand>
</feature>
<feature type="binding site" evidence="1">
    <location>
        <begin position="130"/>
        <end position="133"/>
    </location>
    <ligand>
        <name>GTP</name>
        <dbReference type="ChEBI" id="CHEBI:37565"/>
    </ligand>
</feature>
<comment type="function">
    <text evidence="1">Required for accurate and efficient protein synthesis under certain stress conditions. May act as a fidelity factor of the translation reaction, by catalyzing a one-codon backward translocation of tRNAs on improperly translocated ribosomes. Back-translocation proceeds from a post-translocation (POST) complex to a pre-translocation (PRE) complex, thus giving elongation factor G a second chance to translocate the tRNAs correctly. Binds to ribosomes in a GTP-dependent manner.</text>
</comment>
<comment type="catalytic activity">
    <reaction evidence="1">
        <text>GTP + H2O = GDP + phosphate + H(+)</text>
        <dbReference type="Rhea" id="RHEA:19669"/>
        <dbReference type="ChEBI" id="CHEBI:15377"/>
        <dbReference type="ChEBI" id="CHEBI:15378"/>
        <dbReference type="ChEBI" id="CHEBI:37565"/>
        <dbReference type="ChEBI" id="CHEBI:43474"/>
        <dbReference type="ChEBI" id="CHEBI:58189"/>
        <dbReference type="EC" id="3.6.5.n1"/>
    </reaction>
</comment>
<comment type="subcellular location">
    <subcellularLocation>
        <location evidence="1">Cell inner membrane</location>
        <topology evidence="1">Peripheral membrane protein</topology>
        <orientation evidence="1">Cytoplasmic side</orientation>
    </subcellularLocation>
</comment>
<comment type="similarity">
    <text evidence="1">Belongs to the TRAFAC class translation factor GTPase superfamily. Classic translation factor GTPase family. LepA subfamily.</text>
</comment>
<protein>
    <recommendedName>
        <fullName evidence="1">Elongation factor 4</fullName>
        <shortName evidence="1">EF-4</shortName>
        <ecNumber evidence="1">3.6.5.n1</ecNumber>
    </recommendedName>
    <alternativeName>
        <fullName evidence="1">Ribosomal back-translocase LepA</fullName>
    </alternativeName>
</protein>